<organism>
    <name type="scientific">Neisseria gonorrhoeae (strain ATCC 700825 / FA 1090)</name>
    <dbReference type="NCBI Taxonomy" id="242231"/>
    <lineage>
        <taxon>Bacteria</taxon>
        <taxon>Pseudomonadati</taxon>
        <taxon>Pseudomonadota</taxon>
        <taxon>Betaproteobacteria</taxon>
        <taxon>Neisseriales</taxon>
        <taxon>Neisseriaceae</taxon>
        <taxon>Neisseria</taxon>
    </lineage>
</organism>
<name>DAPD_NEIG1</name>
<comment type="catalytic activity">
    <reaction evidence="1">
        <text>(S)-2,3,4,5-tetrahydrodipicolinate + succinyl-CoA + H2O = (S)-2-succinylamino-6-oxoheptanedioate + CoA</text>
        <dbReference type="Rhea" id="RHEA:17325"/>
        <dbReference type="ChEBI" id="CHEBI:15377"/>
        <dbReference type="ChEBI" id="CHEBI:15685"/>
        <dbReference type="ChEBI" id="CHEBI:16845"/>
        <dbReference type="ChEBI" id="CHEBI:57287"/>
        <dbReference type="ChEBI" id="CHEBI:57292"/>
        <dbReference type="EC" id="2.3.1.117"/>
    </reaction>
</comment>
<comment type="pathway">
    <text evidence="1">Amino-acid biosynthesis; L-lysine biosynthesis via DAP pathway; LL-2,6-diaminopimelate from (S)-tetrahydrodipicolinate (succinylase route): step 1/3.</text>
</comment>
<comment type="subunit">
    <text evidence="1">Homotrimer.</text>
</comment>
<comment type="subcellular location">
    <subcellularLocation>
        <location evidence="1">Cytoplasm</location>
    </subcellularLocation>
</comment>
<comment type="similarity">
    <text evidence="1">Belongs to the transferase hexapeptide repeat family.</text>
</comment>
<evidence type="ECO:0000255" key="1">
    <source>
        <dbReference type="HAMAP-Rule" id="MF_00811"/>
    </source>
</evidence>
<reference key="1">
    <citation type="submission" date="2003-03" db="EMBL/GenBank/DDBJ databases">
        <title>The complete genome sequence of Neisseria gonorrhoeae.</title>
        <authorList>
            <person name="Lewis L.A."/>
            <person name="Gillaspy A.F."/>
            <person name="McLaughlin R.E."/>
            <person name="Gipson M."/>
            <person name="Ducey T.F."/>
            <person name="Ownbey T."/>
            <person name="Hartman K."/>
            <person name="Nydick C."/>
            <person name="Carson M.B."/>
            <person name="Vaughn J."/>
            <person name="Thomson C."/>
            <person name="Song L."/>
            <person name="Lin S."/>
            <person name="Yuan X."/>
            <person name="Najar F."/>
            <person name="Zhan M."/>
            <person name="Ren Q."/>
            <person name="Zhu H."/>
            <person name="Qi S."/>
            <person name="Kenton S.M."/>
            <person name="Lai H."/>
            <person name="White J.D."/>
            <person name="Clifton S."/>
            <person name="Roe B.A."/>
            <person name="Dyer D.W."/>
        </authorList>
    </citation>
    <scope>NUCLEOTIDE SEQUENCE [LARGE SCALE GENOMIC DNA]</scope>
    <source>
        <strain>ATCC 700825 / FA 1090</strain>
    </source>
</reference>
<gene>
    <name evidence="1" type="primary">dapD</name>
    <name type="ordered locus">NGO_1667</name>
</gene>
<sequence length="273" mass="29305">MSLQNIIETAFENRADITPTTVAPEVKEAVLETIRQLDSGKLRVAERLGVGEWKVNEWAKKAVLLSFRIQDNEVLNDGVNKYFDKVPTKFADWSEDEFKNAGFRAVPGAVARRGSFVAKNAVLMPSYVNIGAYVDEGAMVDTWATVGSCAQIGKNVHLSGGVGIGGVLEPLQAAPTIIEDNCFIGARSEIVEGAIVEEGSVISMGVFIGQSTKIFDRTTGEIYQGRVPAGSVVVSGSLPSKDGSHSLYCAVIVKRVDAQTRAKTSVNELLRGI</sequence>
<proteinExistence type="inferred from homology"/>
<feature type="chain" id="PRO_0000196950" description="2,3,4,5-tetrahydropyridine-2,6-dicarboxylate N-succinyltransferase">
    <location>
        <begin position="1"/>
        <end position="273"/>
    </location>
</feature>
<feature type="binding site" evidence="1">
    <location>
        <position position="104"/>
    </location>
    <ligand>
        <name>substrate</name>
    </ligand>
</feature>
<feature type="binding site" evidence="1">
    <location>
        <position position="141"/>
    </location>
    <ligand>
        <name>substrate</name>
    </ligand>
</feature>
<keyword id="KW-0012">Acyltransferase</keyword>
<keyword id="KW-0028">Amino-acid biosynthesis</keyword>
<keyword id="KW-0963">Cytoplasm</keyword>
<keyword id="KW-0220">Diaminopimelate biosynthesis</keyword>
<keyword id="KW-0457">Lysine biosynthesis</keyword>
<keyword id="KW-1185">Reference proteome</keyword>
<keyword id="KW-0677">Repeat</keyword>
<keyword id="KW-0808">Transferase</keyword>
<dbReference type="EC" id="2.3.1.117" evidence="1"/>
<dbReference type="EMBL" id="AE004969">
    <property type="protein sequence ID" value="AAW90292.1"/>
    <property type="molecule type" value="Genomic_DNA"/>
</dbReference>
<dbReference type="RefSeq" id="WP_003689804.1">
    <property type="nucleotide sequence ID" value="NC_002946.2"/>
</dbReference>
<dbReference type="RefSeq" id="YP_208704.1">
    <property type="nucleotide sequence ID" value="NC_002946.2"/>
</dbReference>
<dbReference type="SMR" id="Q5F695"/>
<dbReference type="STRING" id="242231.NGO_1667"/>
<dbReference type="GeneID" id="66753947"/>
<dbReference type="KEGG" id="ngo:NGO_1667"/>
<dbReference type="PATRIC" id="fig|242231.10.peg.1987"/>
<dbReference type="HOGENOM" id="CLU_050859_0_1_4"/>
<dbReference type="UniPathway" id="UPA00034">
    <property type="reaction ID" value="UER00019"/>
</dbReference>
<dbReference type="Proteomes" id="UP000000535">
    <property type="component" value="Chromosome"/>
</dbReference>
<dbReference type="GO" id="GO:0005737">
    <property type="term" value="C:cytoplasm"/>
    <property type="evidence" value="ECO:0007669"/>
    <property type="project" value="UniProtKB-SubCell"/>
</dbReference>
<dbReference type="GO" id="GO:0008666">
    <property type="term" value="F:2,3,4,5-tetrahydropyridine-2,6-dicarboxylate N-succinyltransferase activity"/>
    <property type="evidence" value="ECO:0007669"/>
    <property type="project" value="UniProtKB-UniRule"/>
</dbReference>
<dbReference type="GO" id="GO:0016779">
    <property type="term" value="F:nucleotidyltransferase activity"/>
    <property type="evidence" value="ECO:0007669"/>
    <property type="project" value="TreeGrafter"/>
</dbReference>
<dbReference type="GO" id="GO:0019877">
    <property type="term" value="P:diaminopimelate biosynthetic process"/>
    <property type="evidence" value="ECO:0007669"/>
    <property type="project" value="UniProtKB-UniRule"/>
</dbReference>
<dbReference type="GO" id="GO:0009089">
    <property type="term" value="P:lysine biosynthetic process via diaminopimelate"/>
    <property type="evidence" value="ECO:0007669"/>
    <property type="project" value="UniProtKB-UniRule"/>
</dbReference>
<dbReference type="CDD" id="cd03350">
    <property type="entry name" value="LbH_THP_succinylT"/>
    <property type="match status" value="1"/>
</dbReference>
<dbReference type="Gene3D" id="2.160.10.10">
    <property type="entry name" value="Hexapeptide repeat proteins"/>
    <property type="match status" value="1"/>
</dbReference>
<dbReference type="Gene3D" id="1.10.166.10">
    <property type="entry name" value="Tetrahydrodipicolinate-N-succinyltransferase, N-terminal domain"/>
    <property type="match status" value="1"/>
</dbReference>
<dbReference type="HAMAP" id="MF_00811">
    <property type="entry name" value="DapD"/>
    <property type="match status" value="1"/>
</dbReference>
<dbReference type="InterPro" id="IPR005664">
    <property type="entry name" value="DapD_Trfase_Hexpep_rpt_fam"/>
</dbReference>
<dbReference type="InterPro" id="IPR001451">
    <property type="entry name" value="Hexapep"/>
</dbReference>
<dbReference type="InterPro" id="IPR018357">
    <property type="entry name" value="Hexapep_transf_CS"/>
</dbReference>
<dbReference type="InterPro" id="IPR023180">
    <property type="entry name" value="THP_succinylTrfase_dom1"/>
</dbReference>
<dbReference type="InterPro" id="IPR037133">
    <property type="entry name" value="THP_succinylTrfase_N_sf"/>
</dbReference>
<dbReference type="InterPro" id="IPR011004">
    <property type="entry name" value="Trimer_LpxA-like_sf"/>
</dbReference>
<dbReference type="NCBIfam" id="TIGR00965">
    <property type="entry name" value="dapD"/>
    <property type="match status" value="1"/>
</dbReference>
<dbReference type="NCBIfam" id="NF008808">
    <property type="entry name" value="PRK11830.1"/>
    <property type="match status" value="1"/>
</dbReference>
<dbReference type="PANTHER" id="PTHR19136:SF52">
    <property type="entry name" value="2,3,4,5-TETRAHYDROPYRIDINE-2,6-DICARBOXYLATE N-SUCCINYLTRANSFERASE"/>
    <property type="match status" value="1"/>
</dbReference>
<dbReference type="PANTHER" id="PTHR19136">
    <property type="entry name" value="MOLYBDENUM COFACTOR GUANYLYLTRANSFERASE"/>
    <property type="match status" value="1"/>
</dbReference>
<dbReference type="Pfam" id="PF14602">
    <property type="entry name" value="Hexapep_2"/>
    <property type="match status" value="1"/>
</dbReference>
<dbReference type="Pfam" id="PF14805">
    <property type="entry name" value="THDPS_N_2"/>
    <property type="match status" value="1"/>
</dbReference>
<dbReference type="SUPFAM" id="SSF51161">
    <property type="entry name" value="Trimeric LpxA-like enzymes"/>
    <property type="match status" value="1"/>
</dbReference>
<dbReference type="PROSITE" id="PS00101">
    <property type="entry name" value="HEXAPEP_TRANSFERASES"/>
    <property type="match status" value="1"/>
</dbReference>
<protein>
    <recommendedName>
        <fullName evidence="1">2,3,4,5-tetrahydropyridine-2,6-dicarboxylate N-succinyltransferase</fullName>
        <ecNumber evidence="1">2.3.1.117</ecNumber>
    </recommendedName>
    <alternativeName>
        <fullName evidence="1">Tetrahydrodipicolinate N-succinyltransferase</fullName>
        <shortName evidence="1">THDP succinyltransferase</shortName>
        <shortName evidence="1">THP succinyltransferase</shortName>
        <shortName evidence="1">Tetrahydropicolinate succinylase</shortName>
    </alternativeName>
</protein>
<accession>Q5F695</accession>